<name>CBXPD_MYCS2</name>
<gene>
    <name evidence="6" type="primary">dacB</name>
    <name evidence="8" type="ordered locus">MSMEG_6113</name>
    <name evidence="9" type="ordered locus">MSMEI_5954</name>
</gene>
<dbReference type="EC" id="3.4.16.-" evidence="1"/>
<dbReference type="EMBL" id="CP000480">
    <property type="protein sequence ID" value="ABK75663.1"/>
    <property type="status" value="ALT_INIT"/>
    <property type="molecule type" value="Genomic_DNA"/>
</dbReference>
<dbReference type="EMBL" id="CP001663">
    <property type="protein sequence ID" value="AFP42387.1"/>
    <property type="status" value="ALT_INIT"/>
    <property type="molecule type" value="Genomic_DNA"/>
</dbReference>
<dbReference type="RefSeq" id="WP_029104179.1">
    <property type="nucleotide sequence ID" value="NZ_SIJM01000043.1"/>
</dbReference>
<dbReference type="RefSeq" id="YP_890334.1">
    <property type="nucleotide sequence ID" value="NC_008596.1"/>
</dbReference>
<dbReference type="SMR" id="A0R596"/>
<dbReference type="STRING" id="246196.MSMEG_6113"/>
<dbReference type="MEROPS" id="S13.004"/>
<dbReference type="PaxDb" id="246196-MSMEI_5954"/>
<dbReference type="GeneID" id="93460745"/>
<dbReference type="KEGG" id="msb:LJ00_30230"/>
<dbReference type="KEGG" id="msg:MSMEI_5954"/>
<dbReference type="KEGG" id="msm:MSMEG_6113"/>
<dbReference type="PATRIC" id="fig|246196.19.peg.5952"/>
<dbReference type="eggNOG" id="COG2027">
    <property type="taxonomic scope" value="Bacteria"/>
</dbReference>
<dbReference type="OrthoDB" id="56883at2"/>
<dbReference type="Proteomes" id="UP000000757">
    <property type="component" value="Chromosome"/>
</dbReference>
<dbReference type="Proteomes" id="UP000006158">
    <property type="component" value="Chromosome"/>
</dbReference>
<dbReference type="GO" id="GO:0004185">
    <property type="term" value="F:serine-type carboxypeptidase activity"/>
    <property type="evidence" value="ECO:0007669"/>
    <property type="project" value="InterPro"/>
</dbReference>
<dbReference type="GO" id="GO:0071555">
    <property type="term" value="P:cell wall organization"/>
    <property type="evidence" value="ECO:0007669"/>
    <property type="project" value="UniProtKB-KW"/>
</dbReference>
<dbReference type="GO" id="GO:0000270">
    <property type="term" value="P:peptidoglycan metabolic process"/>
    <property type="evidence" value="ECO:0007669"/>
    <property type="project" value="TreeGrafter"/>
</dbReference>
<dbReference type="GO" id="GO:0006508">
    <property type="term" value="P:proteolysis"/>
    <property type="evidence" value="ECO:0007669"/>
    <property type="project" value="UniProtKB-KW"/>
</dbReference>
<dbReference type="Gene3D" id="3.40.710.10">
    <property type="entry name" value="DD-peptidase/beta-lactamase superfamily"/>
    <property type="match status" value="2"/>
</dbReference>
<dbReference type="InterPro" id="IPR012338">
    <property type="entry name" value="Beta-lactam/transpept-like"/>
</dbReference>
<dbReference type="InterPro" id="IPR000667">
    <property type="entry name" value="Peptidase_S13"/>
</dbReference>
<dbReference type="InterPro" id="IPR056340">
    <property type="entry name" value="Rv3627c-like_N"/>
</dbReference>
<dbReference type="NCBIfam" id="TIGR00666">
    <property type="entry name" value="PBP4"/>
    <property type="match status" value="1"/>
</dbReference>
<dbReference type="PANTHER" id="PTHR30023">
    <property type="entry name" value="D-ALANYL-D-ALANINE CARBOXYPEPTIDASE"/>
    <property type="match status" value="1"/>
</dbReference>
<dbReference type="PANTHER" id="PTHR30023:SF0">
    <property type="entry name" value="PENICILLIN-SENSITIVE CARBOXYPEPTIDASE A"/>
    <property type="match status" value="1"/>
</dbReference>
<dbReference type="Pfam" id="PF02113">
    <property type="entry name" value="Peptidase_S13"/>
    <property type="match status" value="1"/>
</dbReference>
<dbReference type="Pfam" id="PF23714">
    <property type="entry name" value="Rv3627c_N"/>
    <property type="match status" value="1"/>
</dbReference>
<dbReference type="PRINTS" id="PR00922">
    <property type="entry name" value="DADACBPTASE3"/>
</dbReference>
<dbReference type="SUPFAM" id="SSF56601">
    <property type="entry name" value="beta-lactamase/transpeptidase-like"/>
    <property type="match status" value="1"/>
</dbReference>
<protein>
    <recommendedName>
        <fullName evidence="7">Carboxypeptidase DacB</fullName>
        <ecNumber evidence="1">3.4.16.-</ecNumber>
    </recommendedName>
</protein>
<accession>A0R596</accession>
<accession>I7GA32</accession>
<reference key="1">
    <citation type="submission" date="2006-10" db="EMBL/GenBank/DDBJ databases">
        <authorList>
            <person name="Fleischmann R.D."/>
            <person name="Dodson R.J."/>
            <person name="Haft D.H."/>
            <person name="Merkel J.S."/>
            <person name="Nelson W.C."/>
            <person name="Fraser C.M."/>
        </authorList>
    </citation>
    <scope>NUCLEOTIDE SEQUENCE [LARGE SCALE GENOMIC DNA]</scope>
    <source>
        <strain>ATCC 700084 / mc(2)155</strain>
    </source>
</reference>
<reference key="2">
    <citation type="journal article" date="2007" name="Genome Biol.">
        <title>Interrupted coding sequences in Mycobacterium smegmatis: authentic mutations or sequencing errors?</title>
        <authorList>
            <person name="Deshayes C."/>
            <person name="Perrodou E."/>
            <person name="Gallien S."/>
            <person name="Euphrasie D."/>
            <person name="Schaeffer C."/>
            <person name="Van-Dorsselaer A."/>
            <person name="Poch O."/>
            <person name="Lecompte O."/>
            <person name="Reyrat J.-M."/>
        </authorList>
    </citation>
    <scope>NUCLEOTIDE SEQUENCE [LARGE SCALE GENOMIC DNA]</scope>
    <source>
        <strain>ATCC 700084 / mc(2)155</strain>
    </source>
</reference>
<reference key="3">
    <citation type="journal article" date="2009" name="Genome Res.">
        <title>Ortho-proteogenomics: multiple proteomes investigation through orthology and a new MS-based protocol.</title>
        <authorList>
            <person name="Gallien S."/>
            <person name="Perrodou E."/>
            <person name="Carapito C."/>
            <person name="Deshayes C."/>
            <person name="Reyrat J.-M."/>
            <person name="Van Dorsselaer A."/>
            <person name="Poch O."/>
            <person name="Schaeffer C."/>
            <person name="Lecompte O."/>
        </authorList>
    </citation>
    <scope>NUCLEOTIDE SEQUENCE [LARGE SCALE GENOMIC DNA]</scope>
    <source>
        <strain>ATCC 700084 / mc(2)155</strain>
    </source>
</reference>
<reference key="4">
    <citation type="journal article" date="2019" name="Sci. Rep.">
        <title>Characterization of putative DD-carboxypeptidase-encoding genes in Mycobacterium smegmatis.</title>
        <authorList>
            <person name="Ealand C.S."/>
            <person name="Asmal R."/>
            <person name="Mashigo L."/>
            <person name="Campbell L."/>
            <person name="Kana B.D."/>
        </authorList>
    </citation>
    <scope>DISRUPTION PHENOTYPE</scope>
</reference>
<organism>
    <name type="scientific">Mycolicibacterium smegmatis (strain ATCC 700084 / mc(2)155)</name>
    <name type="common">Mycobacterium smegmatis</name>
    <dbReference type="NCBI Taxonomy" id="246196"/>
    <lineage>
        <taxon>Bacteria</taxon>
        <taxon>Bacillati</taxon>
        <taxon>Actinomycetota</taxon>
        <taxon>Actinomycetes</taxon>
        <taxon>Mycobacteriales</taxon>
        <taxon>Mycobacteriaceae</taxon>
        <taxon>Mycolicibacterium</taxon>
    </lineage>
</organism>
<evidence type="ECO:0000250" key="1">
    <source>
        <dbReference type="UniProtKB" id="O06380"/>
    </source>
</evidence>
<evidence type="ECO:0000250" key="2">
    <source>
        <dbReference type="UniProtKB" id="P39844"/>
    </source>
</evidence>
<evidence type="ECO:0000255" key="3"/>
<evidence type="ECO:0000256" key="4">
    <source>
        <dbReference type="SAM" id="MobiDB-lite"/>
    </source>
</evidence>
<evidence type="ECO:0000269" key="5">
    <source>
    </source>
</evidence>
<evidence type="ECO:0000303" key="6">
    <source>
    </source>
</evidence>
<evidence type="ECO:0000305" key="7"/>
<evidence type="ECO:0000312" key="8">
    <source>
        <dbReference type="EMBL" id="ABK75663.1"/>
    </source>
</evidence>
<evidence type="ECO:0000312" key="9">
    <source>
        <dbReference type="EMBL" id="AFP42387.1"/>
    </source>
</evidence>
<sequence>MRPTRWRRSTHVAVGVAVLALVVAVVAAAALFTGKHSDAAEAVPPAPPPATADPGVVPVDLSAPTPTRRGLATALAAALANPDLGLITGRITDADTGAELWEQGARVPMQPASVNKVLTTAAALLTLDRDARLTTTVVAADDQPGLVVLRGGGDTTLSAAPKGTDTWYKGAARISDLADQVRARGIRVTRVRVDTSAYSGPTMAPGWDPADIDGGDIAPMESVMLDGGRTQPTTVESRRSKSPALDAGKALAAALGVEPESVTLMPSGMRGGTTIAEVQSAPLIERLRQMMNESDNVMAESIAREVAEALGRPQSFEGAVGAVLTQLRSVGIDTSGAKLVDSSGLSVDNRLTALTLDEVVNAAAGHTQPALRPLVDLLPIAGGSGTLSNRYLDTDAGRAAAGWLRAKTGSLTGTNALAGIVTDRSGRVLTFALISNNAGPTGRTAIDALAAVLRSCGCGA</sequence>
<keyword id="KW-0121">Carboxypeptidase</keyword>
<keyword id="KW-0961">Cell wall biogenesis/degradation</keyword>
<keyword id="KW-0378">Hydrolase</keyword>
<keyword id="KW-0645">Protease</keyword>
<keyword id="KW-1185">Reference proteome</keyword>
<keyword id="KW-0732">Signal</keyword>
<feature type="signal peptide" evidence="3">
    <location>
        <begin position="1"/>
        <end position="28"/>
    </location>
</feature>
<feature type="chain" id="PRO_5010266702" description="Carboxypeptidase DacB">
    <location>
        <begin position="29"/>
        <end position="460"/>
    </location>
</feature>
<feature type="region of interest" description="Disordered" evidence="4">
    <location>
        <begin position="39"/>
        <end position="64"/>
    </location>
</feature>
<feature type="active site" description="Acyl-ester intermediate" evidence="2">
    <location>
        <position position="113"/>
    </location>
</feature>
<feature type="active site" description="Proton acceptor" evidence="2">
    <location>
        <position position="116"/>
    </location>
</feature>
<feature type="active site" evidence="2">
    <location>
        <position position="294"/>
    </location>
</feature>
<comment type="function">
    <text evidence="1">Carboxypeptidase that cleaves terminal D-alanine from peptidoglycan in the mycobacterial cell wall. May cleave L-Lys-D-Ala and/or D-Ala-D-Ala peptide bonds. Exerts important effects on mycobacterial cell morphology and cell division.</text>
</comment>
<comment type="disruption phenotype">
    <text evidence="5">Essential, it cannot be deleted.</text>
</comment>
<comment type="similarity">
    <text evidence="7">Belongs to the peptidase S13 family.</text>
</comment>
<comment type="sequence caution" evidence="7">
    <conflict type="erroneous initiation">
        <sequence resource="EMBL-CDS" id="ABK75663"/>
    </conflict>
    <text>Extended N-terminus.</text>
</comment>
<comment type="sequence caution" evidence="7">
    <conflict type="erroneous initiation">
        <sequence resource="EMBL-CDS" id="AFP42387"/>
    </conflict>
    <text>Extended N-terminus.</text>
</comment>
<proteinExistence type="inferred from homology"/>